<gene>
    <name type="ordered locus">Bcer98_0893</name>
</gene>
<proteinExistence type="inferred from homology"/>
<feature type="chain" id="PRO_0000369142" description="UPF0736 protein Bcer98_0893">
    <location>
        <begin position="1"/>
        <end position="248"/>
    </location>
</feature>
<organism>
    <name type="scientific">Bacillus cytotoxicus (strain DSM 22905 / CIP 110041 / 391-98 / NVH 391-98)</name>
    <dbReference type="NCBI Taxonomy" id="315749"/>
    <lineage>
        <taxon>Bacteria</taxon>
        <taxon>Bacillati</taxon>
        <taxon>Bacillota</taxon>
        <taxon>Bacilli</taxon>
        <taxon>Bacillales</taxon>
        <taxon>Bacillaceae</taxon>
        <taxon>Bacillus</taxon>
        <taxon>Bacillus cereus group</taxon>
    </lineage>
</organism>
<reference key="1">
    <citation type="journal article" date="2008" name="Chem. Biol. Interact.">
        <title>Extending the Bacillus cereus group genomics to putative food-borne pathogens of different toxicity.</title>
        <authorList>
            <person name="Lapidus A."/>
            <person name="Goltsman E."/>
            <person name="Auger S."/>
            <person name="Galleron N."/>
            <person name="Segurens B."/>
            <person name="Dossat C."/>
            <person name="Land M.L."/>
            <person name="Broussolle V."/>
            <person name="Brillard J."/>
            <person name="Guinebretiere M.-H."/>
            <person name="Sanchis V."/>
            <person name="Nguen-the C."/>
            <person name="Lereclus D."/>
            <person name="Richardson P."/>
            <person name="Wincker P."/>
            <person name="Weissenbach J."/>
            <person name="Ehrlich S.D."/>
            <person name="Sorokin A."/>
        </authorList>
    </citation>
    <scope>NUCLEOTIDE SEQUENCE [LARGE SCALE GENOMIC DNA]</scope>
    <source>
        <strain>DSM 22905 / CIP 110041 / 391-98 / NVH 391-98</strain>
    </source>
</reference>
<protein>
    <recommendedName>
        <fullName evidence="1">UPF0736 protein Bcer98_0893</fullName>
    </recommendedName>
</protein>
<comment type="similarity">
    <text evidence="1">Belongs to the UPF0736 family.</text>
</comment>
<dbReference type="EMBL" id="CP000764">
    <property type="protein sequence ID" value="ABS21228.1"/>
    <property type="molecule type" value="Genomic_DNA"/>
</dbReference>
<dbReference type="RefSeq" id="WP_011983982.1">
    <property type="nucleotide sequence ID" value="NC_009674.1"/>
</dbReference>
<dbReference type="SMR" id="A7GM70"/>
<dbReference type="STRING" id="315749.Bcer98_0893"/>
<dbReference type="GeneID" id="33896258"/>
<dbReference type="KEGG" id="bcy:Bcer98_0893"/>
<dbReference type="eggNOG" id="ENOG502Z8PJ">
    <property type="taxonomic scope" value="Bacteria"/>
</dbReference>
<dbReference type="HOGENOM" id="CLU_1101152_0_0_9"/>
<dbReference type="OrthoDB" id="2960746at2"/>
<dbReference type="Proteomes" id="UP000002300">
    <property type="component" value="Chromosome"/>
</dbReference>
<dbReference type="HAMAP" id="MF_01860">
    <property type="entry name" value="UPF0736"/>
    <property type="match status" value="1"/>
</dbReference>
<dbReference type="InterPro" id="IPR020909">
    <property type="entry name" value="UPF0736"/>
</dbReference>
<dbReference type="Pfam" id="PF12227">
    <property type="entry name" value="DUF3603"/>
    <property type="match status" value="1"/>
</dbReference>
<name>Y893_BACCN</name>
<evidence type="ECO:0000255" key="1">
    <source>
        <dbReference type="HAMAP-Rule" id="MF_01860"/>
    </source>
</evidence>
<sequence>MLYLHDVWVNWFEGEENGYNVCHFYEWRKDDTIELLDQVPLLKVDATLYHYIENELLELPQQLLEDVHHKAYIRKNHERLQQEYCFVVTDGRGIIAVDTIGYNVPIRKSRLIPRQEQMVYEMVENVQAEKYKFQMEETEKEHHILSPSPHIMNGLTRKERQLKQLLFMALDQLHTTKNPAEIRYWYTEWDPSAYGAVQHMEFEDVWKQLYEEAKNGWSEKHEQLCERLVKGQPFFEKLWEMENEQKVN</sequence>
<accession>A7GM70</accession>